<accession>Q05AV1</accession>
<proteinExistence type="evidence at transcript level"/>
<keyword id="KW-0963">Cytoplasm</keyword>
<keyword id="KW-0539">Nucleus</keyword>
<keyword id="KW-1185">Reference proteome</keyword>
<keyword id="KW-0804">Transcription</keyword>
<keyword id="KW-0805">Transcription regulation</keyword>
<keyword id="KW-0833">Ubl conjugation pathway</keyword>
<gene>
    <name type="primary">commd6</name>
</gene>
<feature type="chain" id="PRO_0000294142" description="COMM domain-containing protein 6">
    <location>
        <begin position="1"/>
        <end position="197"/>
    </location>
</feature>
<feature type="domain" description="COMM" evidence="2">
    <location>
        <begin position="130"/>
        <end position="197"/>
    </location>
</feature>
<comment type="function">
    <text evidence="1">Scaffold protein in the commander complex that is essential for endosomal recycling of transmembrane cargos; the commander complex is composed of the CCC subcomplex and the retriever subcomplex (By similarity). May modulate activity of cullin-RING E3 ubiquitin ligase (CRL) complexes (By similarity). Down-regulates activation of NF-kappa-B (By similarity). Inhibits TNF-induced NFKB1 activation (By similarity).</text>
</comment>
<comment type="subunit">
    <text evidence="1">Component of the commander complex consisting of the CCC subcomplex and the retriever subcomplex (By similarity). Component of the CCC subcomplex (By similarity).</text>
</comment>
<comment type="subcellular location">
    <subcellularLocation>
        <location evidence="1">Nucleus</location>
    </subcellularLocation>
    <subcellularLocation>
        <location evidence="1">Cytoplasm</location>
    </subcellularLocation>
</comment>
<comment type="similarity">
    <text evidence="3">Belongs to the COMM domain-containing protein 6 family.</text>
</comment>
<reference key="1">
    <citation type="submission" date="2006-09" db="EMBL/GenBank/DDBJ databases">
        <authorList>
            <consortium name="NIH - Xenopus Gene Collection (XGC) project"/>
        </authorList>
    </citation>
    <scope>NUCLEOTIDE SEQUENCE [LARGE SCALE MRNA]</scope>
    <source>
        <tissue>Embryo</tissue>
    </source>
</reference>
<sequence length="197" mass="22473">MFERELEALGFEKTGDLIKIVPPDLFAELCQQSVQHLQRQRSGVDCHAIFQSFQAVGVHISEDELRKIIRGMTALFSTAAKYNVTCEELLSMLISKLPKQILQVIRHVWNEEGKHLCELQKSRDLLPSGELVDFHWKIGMAVSSDSCRSLNHPYVTVELKVADYSGQITSKILELTIPEFKNFHKQFKEMSAVLETV</sequence>
<evidence type="ECO:0000250" key="1">
    <source>
        <dbReference type="UniProtKB" id="Q7Z4G1"/>
    </source>
</evidence>
<evidence type="ECO:0000255" key="2">
    <source>
        <dbReference type="PROSITE-ProRule" id="PRU00602"/>
    </source>
</evidence>
<evidence type="ECO:0000305" key="3"/>
<protein>
    <recommendedName>
        <fullName>COMM domain-containing protein 6</fullName>
    </recommendedName>
</protein>
<dbReference type="EMBL" id="BC123325">
    <property type="protein sequence ID" value="AAI23326.1"/>
    <property type="molecule type" value="mRNA"/>
</dbReference>
<dbReference type="RefSeq" id="NP_001090390.1">
    <property type="nucleotide sequence ID" value="NM_001096921.1"/>
</dbReference>
<dbReference type="SMR" id="Q05AV1"/>
<dbReference type="DNASU" id="779301"/>
<dbReference type="GeneID" id="779301"/>
<dbReference type="KEGG" id="xla:779301"/>
<dbReference type="AGR" id="Xenbase:XB-GENE-6252473"/>
<dbReference type="CTD" id="779301"/>
<dbReference type="Xenbase" id="XB-GENE-6252473">
    <property type="gene designation" value="commd6.S"/>
</dbReference>
<dbReference type="OrthoDB" id="10251827at2759"/>
<dbReference type="Proteomes" id="UP000186698">
    <property type="component" value="Chromosome 2S"/>
</dbReference>
<dbReference type="Bgee" id="779301">
    <property type="expression patterns" value="Expressed in muscle tissue and 19 other cell types or tissues"/>
</dbReference>
<dbReference type="GO" id="GO:0005737">
    <property type="term" value="C:cytoplasm"/>
    <property type="evidence" value="ECO:0007669"/>
    <property type="project" value="UniProtKB-SubCell"/>
</dbReference>
<dbReference type="GO" id="GO:0005634">
    <property type="term" value="C:nucleus"/>
    <property type="evidence" value="ECO:0007669"/>
    <property type="project" value="UniProtKB-SubCell"/>
</dbReference>
<dbReference type="GO" id="GO:0051059">
    <property type="term" value="F:NF-kappaB binding"/>
    <property type="evidence" value="ECO:0000318"/>
    <property type="project" value="GO_Central"/>
</dbReference>
<dbReference type="GO" id="GO:0007165">
    <property type="term" value="P:signal transduction"/>
    <property type="evidence" value="ECO:0000318"/>
    <property type="project" value="GO_Central"/>
</dbReference>
<dbReference type="CDD" id="cd04754">
    <property type="entry name" value="Commd6"/>
    <property type="match status" value="1"/>
</dbReference>
<dbReference type="InterPro" id="IPR017920">
    <property type="entry name" value="COMM"/>
</dbReference>
<dbReference type="InterPro" id="IPR047155">
    <property type="entry name" value="COMMD4/6/7/8"/>
</dbReference>
<dbReference type="PANTHER" id="PTHR16231">
    <property type="entry name" value="COMM DOMAIN-CONTAINING PROTEIN 4-8 FAMILY MEMBER"/>
    <property type="match status" value="1"/>
</dbReference>
<dbReference type="PANTHER" id="PTHR16231:SF5">
    <property type="entry name" value="COMM DOMAIN-CONTAINING PROTEIN 6"/>
    <property type="match status" value="1"/>
</dbReference>
<dbReference type="Pfam" id="PF07258">
    <property type="entry name" value="COMM_domain"/>
    <property type="match status" value="1"/>
</dbReference>
<dbReference type="Pfam" id="PF21672">
    <property type="entry name" value="COMM_HN"/>
    <property type="match status" value="1"/>
</dbReference>
<dbReference type="PROSITE" id="PS51269">
    <property type="entry name" value="COMM"/>
    <property type="match status" value="1"/>
</dbReference>
<name>COMD6_XENLA</name>
<organism>
    <name type="scientific">Xenopus laevis</name>
    <name type="common">African clawed frog</name>
    <dbReference type="NCBI Taxonomy" id="8355"/>
    <lineage>
        <taxon>Eukaryota</taxon>
        <taxon>Metazoa</taxon>
        <taxon>Chordata</taxon>
        <taxon>Craniata</taxon>
        <taxon>Vertebrata</taxon>
        <taxon>Euteleostomi</taxon>
        <taxon>Amphibia</taxon>
        <taxon>Batrachia</taxon>
        <taxon>Anura</taxon>
        <taxon>Pipoidea</taxon>
        <taxon>Pipidae</taxon>
        <taxon>Xenopodinae</taxon>
        <taxon>Xenopus</taxon>
        <taxon>Xenopus</taxon>
    </lineage>
</organism>